<comment type="subcellular location">
    <subcellularLocation>
        <location evidence="2">Membrane</location>
        <topology evidence="2">Multi-pass membrane protein</topology>
    </subcellularLocation>
</comment>
<comment type="similarity">
    <text evidence="2">Belongs to the anion channel-forming bestrophin (TC 1.A.46) family. Calcium-sensitive chloride channel subfamily.</text>
</comment>
<accession>Q19978</accession>
<feature type="chain" id="PRO_0000143131" description="Bestrophin homolog 14">
    <location>
        <begin position="1"/>
        <end position="405"/>
    </location>
</feature>
<feature type="transmembrane region" description="Helical" evidence="1">
    <location>
        <begin position="28"/>
        <end position="48"/>
    </location>
</feature>
<feature type="transmembrane region" description="Helical" evidence="1">
    <location>
        <begin position="63"/>
        <end position="83"/>
    </location>
</feature>
<feature type="transmembrane region" description="Helical" evidence="1">
    <location>
        <begin position="223"/>
        <end position="243"/>
    </location>
</feature>
<feature type="transmembrane region" description="Helical" evidence="1">
    <location>
        <begin position="256"/>
        <end position="276"/>
    </location>
</feature>
<dbReference type="EMBL" id="Z72509">
    <property type="protein sequence ID" value="CAA96648.3"/>
    <property type="molecule type" value="Genomic_DNA"/>
</dbReference>
<dbReference type="PIR" id="H89192">
    <property type="entry name" value="H89192"/>
</dbReference>
<dbReference type="PIR" id="T21670">
    <property type="entry name" value="T21670"/>
</dbReference>
<dbReference type="RefSeq" id="NP_505708.2">
    <property type="nucleotide sequence ID" value="NM_073307.6"/>
</dbReference>
<dbReference type="SMR" id="Q19978"/>
<dbReference type="BioGRID" id="44500">
    <property type="interactions" value="3"/>
</dbReference>
<dbReference type="STRING" id="6239.F32G8.4.1"/>
<dbReference type="PaxDb" id="6239-F32G8.4"/>
<dbReference type="PeptideAtlas" id="Q19978"/>
<dbReference type="EnsemblMetazoa" id="F32G8.4.1">
    <property type="protein sequence ID" value="F32G8.4.1"/>
    <property type="gene ID" value="WBGene00009340"/>
</dbReference>
<dbReference type="GeneID" id="179471"/>
<dbReference type="KEGG" id="cel:CELE_F32G8.4"/>
<dbReference type="UCSC" id="F32G8.4">
    <property type="organism name" value="c. elegans"/>
</dbReference>
<dbReference type="AGR" id="WB:WBGene00009340"/>
<dbReference type="CTD" id="179471"/>
<dbReference type="WormBase" id="F32G8.4">
    <property type="protein sequence ID" value="CE37903"/>
    <property type="gene ID" value="WBGene00009340"/>
    <property type="gene designation" value="best-14"/>
</dbReference>
<dbReference type="eggNOG" id="KOG3547">
    <property type="taxonomic scope" value="Eukaryota"/>
</dbReference>
<dbReference type="HOGENOM" id="CLU_018069_0_1_1"/>
<dbReference type="InParanoid" id="Q19978"/>
<dbReference type="OMA" id="IAHMMAT"/>
<dbReference type="OrthoDB" id="201595at2759"/>
<dbReference type="PhylomeDB" id="Q19978"/>
<dbReference type="PRO" id="PR:Q19978"/>
<dbReference type="Proteomes" id="UP000001940">
    <property type="component" value="Chromosome V"/>
</dbReference>
<dbReference type="Bgee" id="WBGene00009340">
    <property type="expression patterns" value="Expressed in larva and 3 other cell types or tissues"/>
</dbReference>
<dbReference type="GO" id="GO:0016020">
    <property type="term" value="C:membrane"/>
    <property type="evidence" value="ECO:0007669"/>
    <property type="project" value="UniProtKB-SubCell"/>
</dbReference>
<dbReference type="GO" id="GO:0005254">
    <property type="term" value="F:chloride channel activity"/>
    <property type="evidence" value="ECO:0000318"/>
    <property type="project" value="GO_Central"/>
</dbReference>
<dbReference type="InterPro" id="IPR000615">
    <property type="entry name" value="Bestrophin"/>
</dbReference>
<dbReference type="InterPro" id="IPR021134">
    <property type="entry name" value="Bestrophin-like"/>
</dbReference>
<dbReference type="PANTHER" id="PTHR10736">
    <property type="entry name" value="BESTROPHIN"/>
    <property type="match status" value="1"/>
</dbReference>
<dbReference type="PANTHER" id="PTHR10736:SF31">
    <property type="entry name" value="BESTROPHIN HOMOLOG 14"/>
    <property type="match status" value="1"/>
</dbReference>
<dbReference type="Pfam" id="PF01062">
    <property type="entry name" value="Bestrophin"/>
    <property type="match status" value="1"/>
</dbReference>
<keyword id="KW-0472">Membrane</keyword>
<keyword id="KW-1185">Reference proteome</keyword>
<keyword id="KW-0812">Transmembrane</keyword>
<keyword id="KW-1133">Transmembrane helix</keyword>
<sequence length="405" mass="47349">MTISYDEEFSSLMLRWRGSIWKAVLKDLIGFYIAYYIVLAFQWYLLDEKGKEYFTGWIMWCEIGAQYIPLSFLLGFFVSLIVARWWEQFNCISWPDKMMIMVSACLPGNENMVVRQTIARWSSLQAAIAWSGVSVKTLKRFPTERHMVASKLMTEEEYDLYMNTDAPHGKWFIPILWIVNLIKKQKQKGIIDSIQMDMLLKQVYSYRDGFAMLFVYDWIKIPLVYTQVVAIATYGYFFICLIGRQPKLDQRSMEKEITILFPIFTTFQMLFYLGWLKVGQYLMNPFGEDDDDFELNYVLDRNTAIAHMMASELSDQLPSIGAPMVPAVPHTRASFKIQDVIPKSHLAGFKLSEAEMKLIKPEDLEEHERLMEETKVTNRQRLGTLVRALEKKSRTNATINEDDEE</sequence>
<reference key="1">
    <citation type="journal article" date="1998" name="Science">
        <title>Genome sequence of the nematode C. elegans: a platform for investigating biology.</title>
        <authorList>
            <consortium name="The C. elegans sequencing consortium"/>
        </authorList>
    </citation>
    <scope>NUCLEOTIDE SEQUENCE [LARGE SCALE GENOMIC DNA]</scope>
    <source>
        <strain>Bristol N2</strain>
    </source>
</reference>
<evidence type="ECO:0000255" key="1"/>
<evidence type="ECO:0000305" key="2"/>
<protein>
    <recommendedName>
        <fullName>Bestrophin homolog 14</fullName>
    </recommendedName>
</protein>
<proteinExistence type="inferred from homology"/>
<gene>
    <name type="primary">best-14</name>
    <name type="ORF">F32G8.4</name>
</gene>
<name>BST14_CAEEL</name>
<organism>
    <name type="scientific">Caenorhabditis elegans</name>
    <dbReference type="NCBI Taxonomy" id="6239"/>
    <lineage>
        <taxon>Eukaryota</taxon>
        <taxon>Metazoa</taxon>
        <taxon>Ecdysozoa</taxon>
        <taxon>Nematoda</taxon>
        <taxon>Chromadorea</taxon>
        <taxon>Rhabditida</taxon>
        <taxon>Rhabditina</taxon>
        <taxon>Rhabditomorpha</taxon>
        <taxon>Rhabditoidea</taxon>
        <taxon>Rhabditidae</taxon>
        <taxon>Peloderinae</taxon>
        <taxon>Caenorhabditis</taxon>
    </lineage>
</organism>